<feature type="chain" id="PRO_0000221416" description="Ribosome-inactivating protein luffin-B">
    <location>
        <begin position="1"/>
        <end position="250"/>
    </location>
</feature>
<feature type="active site" evidence="1">
    <location>
        <position position="160"/>
    </location>
</feature>
<feature type="strand" evidence="3">
    <location>
        <begin position="3"/>
        <end position="6"/>
    </location>
</feature>
<feature type="helix" evidence="3">
    <location>
        <begin position="12"/>
        <end position="25"/>
    </location>
</feature>
<feature type="strand" evidence="3">
    <location>
        <begin position="28"/>
        <end position="32"/>
    </location>
</feature>
<feature type="strand" evidence="3">
    <location>
        <begin position="35"/>
        <end position="38"/>
    </location>
</feature>
<feature type="helix" evidence="3">
    <location>
        <begin position="44"/>
        <end position="47"/>
    </location>
</feature>
<feature type="strand" evidence="3">
    <location>
        <begin position="48"/>
        <end position="54"/>
    </location>
</feature>
<feature type="strand" evidence="3">
    <location>
        <begin position="60"/>
        <end position="66"/>
    </location>
</feature>
<feature type="turn" evidence="3">
    <location>
        <begin position="67"/>
        <end position="69"/>
    </location>
</feature>
<feature type="strand" evidence="3">
    <location>
        <begin position="72"/>
        <end position="77"/>
    </location>
</feature>
<feature type="strand" evidence="3">
    <location>
        <begin position="80"/>
        <end position="83"/>
    </location>
</feature>
<feature type="helix" evidence="3">
    <location>
        <begin position="87"/>
        <end position="92"/>
    </location>
</feature>
<feature type="turn" evidence="3">
    <location>
        <begin position="93"/>
        <end position="95"/>
    </location>
</feature>
<feature type="strand" evidence="3">
    <location>
        <begin position="100"/>
        <end position="104"/>
    </location>
</feature>
<feature type="helix" evidence="3">
    <location>
        <begin position="111"/>
        <end position="118"/>
    </location>
</feature>
<feature type="helix" evidence="3">
    <location>
        <begin position="122"/>
        <end position="124"/>
    </location>
</feature>
<feature type="helix" evidence="3">
    <location>
        <begin position="129"/>
        <end position="140"/>
    </location>
</feature>
<feature type="turn" evidence="3">
    <location>
        <begin position="144"/>
        <end position="146"/>
    </location>
</feature>
<feature type="helix" evidence="3">
    <location>
        <begin position="147"/>
        <end position="157"/>
    </location>
</feature>
<feature type="helix" evidence="3">
    <location>
        <begin position="159"/>
        <end position="163"/>
    </location>
</feature>
<feature type="helix" evidence="3">
    <location>
        <begin position="165"/>
        <end position="173"/>
    </location>
</feature>
<feature type="strand" evidence="3">
    <location>
        <begin position="175"/>
        <end position="177"/>
    </location>
</feature>
<feature type="helix" evidence="3">
    <location>
        <begin position="183"/>
        <end position="191"/>
    </location>
</feature>
<feature type="helix" evidence="3">
    <location>
        <begin position="193"/>
        <end position="203"/>
    </location>
</feature>
<feature type="turn" evidence="3">
    <location>
        <begin position="204"/>
        <end position="208"/>
    </location>
</feature>
<feature type="strand" evidence="3">
    <location>
        <begin position="209"/>
        <end position="217"/>
    </location>
</feature>
<feature type="strand" evidence="3">
    <location>
        <begin position="223"/>
        <end position="228"/>
    </location>
</feature>
<feature type="helix" evidence="3">
    <location>
        <begin position="232"/>
        <end position="235"/>
    </location>
</feature>
<feature type="helix" evidence="3">
    <location>
        <begin position="246"/>
        <end position="248"/>
    </location>
</feature>
<proteinExistence type="evidence at protein level"/>
<keyword id="KW-0002">3D-structure</keyword>
<keyword id="KW-0051">Antiviral defense</keyword>
<keyword id="KW-0903">Direct protein sequencing</keyword>
<keyword id="KW-0378">Hydrolase</keyword>
<keyword id="KW-0611">Plant defense</keyword>
<keyword id="KW-0652">Protein synthesis inhibitor</keyword>
<keyword id="KW-0800">Toxin</keyword>
<reference key="1">
    <citation type="journal article" date="1991" name="Agric. Biol. Chem.">
        <title>Complete amino acid sequence of luffin-b, a ribosome-inactivating protein from sponge gourd (Luffa cylindrica) seeds.</title>
        <authorList>
            <person name="Islam M.R."/>
            <person name="Hirayama H."/>
            <person name="Funatsu G."/>
        </authorList>
    </citation>
    <scope>PROTEIN SEQUENCE</scope>
    <source>
        <tissue>Seed</tissue>
    </source>
</reference>
<evidence type="ECO:0000250" key="1"/>
<evidence type="ECO:0000305" key="2"/>
<evidence type="ECO:0007829" key="3">
    <source>
        <dbReference type="PDB" id="1NIO"/>
    </source>
</evidence>
<dbReference type="EC" id="3.2.2.22"/>
<dbReference type="PIR" id="JN0108">
    <property type="entry name" value="JN0108"/>
</dbReference>
<dbReference type="PDB" id="1NIO">
    <property type="method" value="X-ray"/>
    <property type="resolution" value="2.00 A"/>
    <property type="chains" value="A=1-250"/>
</dbReference>
<dbReference type="PDBsum" id="1NIO"/>
<dbReference type="SMR" id="P22851"/>
<dbReference type="EvolutionaryTrace" id="P22851"/>
<dbReference type="GO" id="GO:0030598">
    <property type="term" value="F:rRNA N-glycosylase activity"/>
    <property type="evidence" value="ECO:0007669"/>
    <property type="project" value="UniProtKB-EC"/>
</dbReference>
<dbReference type="GO" id="GO:0090729">
    <property type="term" value="F:toxin activity"/>
    <property type="evidence" value="ECO:0007669"/>
    <property type="project" value="UniProtKB-KW"/>
</dbReference>
<dbReference type="GO" id="GO:0051607">
    <property type="term" value="P:defense response to virus"/>
    <property type="evidence" value="ECO:0007669"/>
    <property type="project" value="UniProtKB-KW"/>
</dbReference>
<dbReference type="GO" id="GO:0017148">
    <property type="term" value="P:negative regulation of translation"/>
    <property type="evidence" value="ECO:0007669"/>
    <property type="project" value="UniProtKB-KW"/>
</dbReference>
<dbReference type="Gene3D" id="3.40.420.10">
    <property type="entry name" value="Ricin (A subunit), domain 1"/>
    <property type="match status" value="1"/>
</dbReference>
<dbReference type="Gene3D" id="4.10.470.10">
    <property type="entry name" value="Ricin (A Subunit), domain 2"/>
    <property type="match status" value="1"/>
</dbReference>
<dbReference type="InterPro" id="IPR036041">
    <property type="entry name" value="Ribosome-inact_prot_sf"/>
</dbReference>
<dbReference type="InterPro" id="IPR017989">
    <property type="entry name" value="Ribosome_inactivat_1/2"/>
</dbReference>
<dbReference type="InterPro" id="IPR001574">
    <property type="entry name" value="Ribosome_inactivat_prot"/>
</dbReference>
<dbReference type="InterPro" id="IPR017988">
    <property type="entry name" value="Ribosome_inactivat_prot_CS"/>
</dbReference>
<dbReference type="InterPro" id="IPR016138">
    <property type="entry name" value="Ribosome_inactivat_prot_sub1"/>
</dbReference>
<dbReference type="InterPro" id="IPR016139">
    <property type="entry name" value="Ribosome_inactivat_prot_sub2"/>
</dbReference>
<dbReference type="PANTHER" id="PTHR33453">
    <property type="match status" value="1"/>
</dbReference>
<dbReference type="PANTHER" id="PTHR33453:SF34">
    <property type="entry name" value="RIBOSOME-INACTIVATING PROTEIN"/>
    <property type="match status" value="1"/>
</dbReference>
<dbReference type="Pfam" id="PF00161">
    <property type="entry name" value="RIP"/>
    <property type="match status" value="1"/>
</dbReference>
<dbReference type="PRINTS" id="PR00396">
    <property type="entry name" value="SHIGARICIN"/>
</dbReference>
<dbReference type="SUPFAM" id="SSF56371">
    <property type="entry name" value="Ribosome inactivating proteins (RIP)"/>
    <property type="match status" value="1"/>
</dbReference>
<dbReference type="PROSITE" id="PS00275">
    <property type="entry name" value="SHIGA_RICIN"/>
    <property type="match status" value="1"/>
</dbReference>
<organism>
    <name type="scientific">Luffa aegyptiaca</name>
    <name type="common">Sponge gourd</name>
    <name type="synonym">Luffa cylindrica</name>
    <dbReference type="NCBI Taxonomy" id="3670"/>
    <lineage>
        <taxon>Eukaryota</taxon>
        <taxon>Viridiplantae</taxon>
        <taxon>Streptophyta</taxon>
        <taxon>Embryophyta</taxon>
        <taxon>Tracheophyta</taxon>
        <taxon>Spermatophyta</taxon>
        <taxon>Magnoliopsida</taxon>
        <taxon>eudicotyledons</taxon>
        <taxon>Gunneridae</taxon>
        <taxon>Pentapetalae</taxon>
        <taxon>rosids</taxon>
        <taxon>fabids</taxon>
        <taxon>Cucurbitales</taxon>
        <taxon>Cucurbitaceae</taxon>
        <taxon>Sicyoeae</taxon>
        <taxon>Luffa</taxon>
    </lineage>
</organism>
<comment type="catalytic activity">
    <reaction>
        <text>Endohydrolysis of the N-glycosidic bond at one specific adenosine on the 28S rRNA.</text>
        <dbReference type="EC" id="3.2.2.22"/>
    </reaction>
</comment>
<comment type="similarity">
    <text evidence="2">Belongs to the ribosome-inactivating protein family. Type 1 RIP subfamily.</text>
</comment>
<sequence length="250" mass="27293">ANVSFSLSGADSKSYSKFITALRKALPSKEKVSNIPLLLPSASGASRYILMQLSNYDAKAITMAIDVTNVYIMGYLVNSTSYFANESDAKLASQYVFKGSTLVTIPYSGNYERLQNAAGKIREKIPLGFRALDSALTSIFHYDSTAAAAAFLVILQTTAEASRFKYIEGQIIERIPKNEVPSPAALSLENEAWSLLSKQIQLAQTNNGAFRTPVVIIDNKGQRVEITNLASKVQIKDVNSKLLLNKQNIA</sequence>
<accession>P22851</accession>
<protein>
    <recommendedName>
        <fullName>Ribosome-inactivating protein luffin-B</fullName>
        <ecNumber>3.2.2.22</ecNumber>
    </recommendedName>
    <alternativeName>
        <fullName>rRNA N-glycosidase</fullName>
    </alternativeName>
</protein>
<name>RIPB_LUFAE</name>